<proteinExistence type="evidence at protein level"/>
<sequence>MAAAAAAGPSPGSGPGDSPEGPEGEAPERRRKAHGMLKLYYGLSEGEAAGRPAGPDPLDPTDLNGAHFDPEVYLDKLRRECPLAQLMDSETDMVRQIRALDSDMQTLVYENYNKFISATDTIRKMKNDFRKMEDEMDRLATNMAVITDFSARISATLQDRHERITKLAGVHALLRKLQFLFELPSRLTKCVELGAYGQAVRYQGRAQAVLQQYQHLPSFRAIQDDCQVITARLAQQLRQRFREGGSGAPEQAECVELLLALGEPAEELCEEFLAHARGRLEKELRNLEAELGPSPPAPDVLEFTDHGGSGFVGGLCQVAAAYQELFAAQGPAGAEKLAAFARQLGSRYFALVERRLAQEQGGGDNSLLVRALDRFHRRLRAPGALLAAAGLADAATEIVERVARERLGHHLQGLRAAFLGCLTDVRQALAAPRVAGKEGPGLAELLANVASSILSHIKASLAAVHLFTAKEVSFSNKPYFRGEFCSQGVREGLIVGFVHSMCQTAQSFCDSPGEKGGATPPALLLLLSRLCLDYETATISYILTLTDEQFLVQDQFPVTPVSTLCAEARETARRLLTHYVKVQGLVISQMLRKSVETRDWLSTLEPRNVRAVMKRVVEDTTAIDVQVGLLYEEGVRKAQSSDSSKRTFSVYSSSRQQGRYAPSYTPSAPMDTNLLSNIQKLFSERIDVFSPVEFNKVSVLTGIIKISLKTLLECVRLRTFGRFGLQQVQVDCHFLQLYLWRFVADEELVHLLLDEVVASAALRCPDPVPMEPSVVEVICERG</sequence>
<comment type="function">
    <text evidence="4 5">Acts as a component of the GARP complex that is involved in retrograde transport from early and late endosomes to the trans-Golgi network (TGN). The GARP complex is required for the maintenance of protein retrieval from endosomes to the TGN, acid hydrolase sorting, lysosome function, endosomal cholesterol traffic and autophagy. VPS51 participates in retrograde transport of acid hydrolase receptors, likely by promoting tethering and SNARE-dependent fusion of endosome-derived carriers to the TGN (PubMed:20685960). Acts as a component of the EARP complex that is involved in endocytic recycling. The EARP complex associates with Rab4-positive endosomes and promotes recycling of internalized transferrin receptor (TFRC) to the plasma membrane (PubMed:25799061).</text>
</comment>
<comment type="subunit">
    <text evidence="4 5 6 7 9">Component of the Golgi-associated retrograde protein (GARP) complex, also called VFT (VPS fifty-three) complex, composed of VPS51, VPS52, VPS53 and VPS54 (PubMed:20685960, PubMed:27440922, PubMed:30624672). Component of the endosome-associated retrograde protein (EARP) complex, composed of VPS51, VPS52, VPS53 and VPS50/Syndetin (PubMed:25799061, PubMed:27440922, PubMed:30624672). EIPR1 interacts with both EARP and GARP complexes and mediates the recruitment of the GARP complex to the trans-Golgi network (PubMed:27440922). Interacts with STX6 (via N-terminus) (PubMed:20685960). Interacts with VPS50 and VPS54 in an EIPR1-independent manner (PubMed:31721635).</text>
</comment>
<comment type="interaction">
    <interactant intactId="EBI-16067837">
        <id>Q9UID3-1</id>
    </interactant>
    <interactant intactId="EBI-16067850">
        <id>O60499-1</id>
        <label>STX10</label>
    </interactant>
    <organismsDiffer>false</organismsDiffer>
    <experiments>5</experiments>
</comment>
<comment type="interaction">
    <interactant intactId="EBI-16067837">
        <id>Q9UID3-1</id>
    </interactant>
    <interactant intactId="EBI-2695795">
        <id>O43752</id>
        <label>STX6</label>
    </interactant>
    <organismsDiffer>false</organismsDiffer>
    <experiments>8</experiments>
</comment>
<comment type="interaction">
    <interactant intactId="EBI-16067837">
        <id>Q9UID3-1</id>
    </interactant>
    <interactant intactId="EBI-11044388">
        <id>Q96JG6</id>
        <label>VPS50</label>
    </interactant>
    <organismsDiffer>false</organismsDiffer>
    <experiments>6</experiments>
</comment>
<comment type="interaction">
    <interactant intactId="EBI-16067837">
        <id>Q9UID3-1</id>
    </interactant>
    <interactant intactId="EBI-2799833">
        <id>Q8N1B4</id>
        <label>VPS52</label>
    </interactant>
    <organismsDiffer>false</organismsDiffer>
    <experiments>4</experiments>
</comment>
<comment type="subcellular location">
    <subcellularLocation>
        <location evidence="4">Golgi apparatus</location>
        <location evidence="4">trans-Golgi network</location>
    </subcellularLocation>
    <subcellularLocation>
        <location evidence="5">Recycling endosome</location>
    </subcellularLocation>
    <text evidence="5">Localizes to the trans-Golgi network as part of the GARP complex, while it localizes to recycling endosomes as part of the EARP complex (PubMed:25799061).</text>
</comment>
<comment type="alternative products">
    <event type="alternative splicing"/>
    <isoform>
        <id>Q9UID3-1</id>
        <name>1</name>
        <sequence type="displayed"/>
    </isoform>
    <isoform>
        <id>Q9UID3-2</id>
        <name>2</name>
        <sequence type="described" ref="VSP_014700"/>
    </isoform>
</comment>
<comment type="disease" evidence="7 8">
    <disease id="DI-05671">
        <name>Pontocerebellar hypoplasia 13</name>
        <acronym>PCH13</acronym>
        <description>A form of pontocerebellar hypoplasia, a disorder characterized by structural defects of the pons and cerebellum, evident upon brain imaging. PCH13 is an autosomal recessive form characterized by delayed psychomotor development, absent speech, severe intellectual disability and postnatal microcephaly, with brain malformations consisting of cerebellar atrophy and hypoplastic corpus callosum. Additional features, including seizures and visual impairment, are variable.</description>
        <dbReference type="MIM" id="618606"/>
    </disease>
    <text>The disease may be caused by variants affecting the gene represented in this entry.</text>
</comment>
<comment type="similarity">
    <text evidence="11">Belongs to the VPS51 family.</text>
</comment>
<dbReference type="EMBL" id="AF024631">
    <property type="protein sequence ID" value="AAF21627.2"/>
    <property type="molecule type" value="mRNA"/>
</dbReference>
<dbReference type="EMBL" id="AF289557">
    <property type="protein sequence ID" value="AAL55741.1"/>
    <property type="molecule type" value="mRNA"/>
</dbReference>
<dbReference type="EMBL" id="AL833818">
    <property type="protein sequence ID" value="CAD38681.2"/>
    <property type="molecule type" value="mRNA"/>
</dbReference>
<dbReference type="EMBL" id="AP003068">
    <property type="status" value="NOT_ANNOTATED_CDS"/>
    <property type="molecule type" value="Genomic_DNA"/>
</dbReference>
<dbReference type="EMBL" id="BC006555">
    <property type="protein sequence ID" value="AAH06555.2"/>
    <property type="molecule type" value="mRNA"/>
</dbReference>
<dbReference type="EMBL" id="BC007198">
    <property type="protein sequence ID" value="AAH07198.1"/>
    <property type="molecule type" value="mRNA"/>
</dbReference>
<dbReference type="EMBL" id="BC009285">
    <property type="protein sequence ID" value="AAH09285.2"/>
    <property type="molecule type" value="mRNA"/>
</dbReference>
<dbReference type="EMBL" id="BC010540">
    <property type="protein sequence ID" value="AAH10540.1"/>
    <property type="molecule type" value="mRNA"/>
</dbReference>
<dbReference type="EMBL" id="BC017438">
    <property type="protein sequence ID" value="AAH17438.1"/>
    <property type="molecule type" value="mRNA"/>
</dbReference>
<dbReference type="CCDS" id="CCDS8093.1">
    <molecule id="Q9UID3-1"/>
</dbReference>
<dbReference type="RefSeq" id="NP_037397.2">
    <molecule id="Q9UID3-1"/>
    <property type="nucleotide sequence ID" value="NM_013265.3"/>
</dbReference>
<dbReference type="PDB" id="4J2C">
    <property type="method" value="X-ray"/>
    <property type="resolution" value="1.80 A"/>
    <property type="chains" value="B/D=33-49"/>
</dbReference>
<dbReference type="PDBsum" id="4J2C"/>
<dbReference type="SMR" id="Q9UID3"/>
<dbReference type="BioGRID" id="107197">
    <property type="interactions" value="194"/>
</dbReference>
<dbReference type="ComplexPortal" id="CPX-6207">
    <property type="entry name" value="EARP tethering complex"/>
</dbReference>
<dbReference type="ComplexPortal" id="CPX-6208">
    <property type="entry name" value="GARP tethering complex"/>
</dbReference>
<dbReference type="CORUM" id="Q9UID3"/>
<dbReference type="DIP" id="DIP-60562N"/>
<dbReference type="FunCoup" id="Q9UID3">
    <property type="interactions" value="2476"/>
</dbReference>
<dbReference type="IntAct" id="Q9UID3">
    <property type="interactions" value="86"/>
</dbReference>
<dbReference type="MINT" id="Q9UID3"/>
<dbReference type="STRING" id="9606.ENSP00000279281"/>
<dbReference type="GlyGen" id="Q9UID3">
    <property type="glycosylation" value="2 sites, 1 O-linked glycan (1 site)"/>
</dbReference>
<dbReference type="iPTMnet" id="Q9UID3"/>
<dbReference type="PhosphoSitePlus" id="Q9UID3"/>
<dbReference type="SwissPalm" id="Q9UID3"/>
<dbReference type="BioMuta" id="VPS51"/>
<dbReference type="DMDM" id="71153003"/>
<dbReference type="jPOST" id="Q9UID3"/>
<dbReference type="MassIVE" id="Q9UID3"/>
<dbReference type="PaxDb" id="9606-ENSP00000279281"/>
<dbReference type="PeptideAtlas" id="Q9UID3"/>
<dbReference type="ProteomicsDB" id="84494">
    <molecule id="Q9UID3-1"/>
</dbReference>
<dbReference type="ProteomicsDB" id="84495">
    <molecule id="Q9UID3-2"/>
</dbReference>
<dbReference type="Pumba" id="Q9UID3"/>
<dbReference type="Antibodypedia" id="49945">
    <property type="antibodies" value="83 antibodies from 28 providers"/>
</dbReference>
<dbReference type="DNASU" id="738"/>
<dbReference type="Ensembl" id="ENST00000279281.8">
    <molecule id="Q9UID3-1"/>
    <property type="protein sequence ID" value="ENSP00000279281.3"/>
    <property type="gene ID" value="ENSG00000149823.10"/>
</dbReference>
<dbReference type="GeneID" id="738"/>
<dbReference type="KEGG" id="hsa:738"/>
<dbReference type="MANE-Select" id="ENST00000279281.8">
    <property type="protein sequence ID" value="ENSP00000279281.3"/>
    <property type="RefSeq nucleotide sequence ID" value="NM_013265.4"/>
    <property type="RefSeq protein sequence ID" value="NP_037397.2"/>
</dbReference>
<dbReference type="UCSC" id="uc001ocr.3">
    <molecule id="Q9UID3-1"/>
    <property type="organism name" value="human"/>
</dbReference>
<dbReference type="AGR" id="HGNC:1172"/>
<dbReference type="CTD" id="738"/>
<dbReference type="DisGeNET" id="738"/>
<dbReference type="GeneCards" id="VPS51"/>
<dbReference type="HGNC" id="HGNC:1172">
    <property type="gene designation" value="VPS51"/>
</dbReference>
<dbReference type="HPA" id="ENSG00000149823">
    <property type="expression patterns" value="Low tissue specificity"/>
</dbReference>
<dbReference type="MalaCards" id="VPS51"/>
<dbReference type="MIM" id="615738">
    <property type="type" value="gene"/>
</dbReference>
<dbReference type="MIM" id="618606">
    <property type="type" value="phenotype"/>
</dbReference>
<dbReference type="neXtProt" id="NX_Q9UID3"/>
<dbReference type="OpenTargets" id="ENSG00000149823"/>
<dbReference type="PharmGKB" id="PA25485"/>
<dbReference type="VEuPathDB" id="HostDB:ENSG00000149823"/>
<dbReference type="eggNOG" id="KOG2346">
    <property type="taxonomic scope" value="Eukaryota"/>
</dbReference>
<dbReference type="GeneTree" id="ENSGT00390000001738"/>
<dbReference type="HOGENOM" id="CLU_020677_0_0_1"/>
<dbReference type="InParanoid" id="Q9UID3"/>
<dbReference type="OMA" id="DIICERG"/>
<dbReference type="OrthoDB" id="203678at2759"/>
<dbReference type="PAN-GO" id="Q9UID3">
    <property type="GO annotations" value="8 GO annotations based on evolutionary models"/>
</dbReference>
<dbReference type="PhylomeDB" id="Q9UID3"/>
<dbReference type="TreeFam" id="TF314825"/>
<dbReference type="PathwayCommons" id="Q9UID3"/>
<dbReference type="Reactome" id="R-HSA-6811440">
    <property type="pathway name" value="Retrograde transport at the Trans-Golgi-Network"/>
</dbReference>
<dbReference type="SignaLink" id="Q9UID3"/>
<dbReference type="BioGRID-ORCS" id="738">
    <property type="hits" value="436 hits in 1169 CRISPR screens"/>
</dbReference>
<dbReference type="CD-CODE" id="FB4E32DD">
    <property type="entry name" value="Presynaptic clusters and postsynaptic densities"/>
</dbReference>
<dbReference type="ChiTaRS" id="VPS51">
    <property type="organism name" value="human"/>
</dbReference>
<dbReference type="EvolutionaryTrace" id="Q9UID3"/>
<dbReference type="GenomeRNAi" id="738"/>
<dbReference type="Pharos" id="Q9UID3">
    <property type="development level" value="Tbio"/>
</dbReference>
<dbReference type="PRO" id="PR:Q9UID3"/>
<dbReference type="Proteomes" id="UP000005640">
    <property type="component" value="Chromosome 11"/>
</dbReference>
<dbReference type="RNAct" id="Q9UID3">
    <property type="molecule type" value="protein"/>
</dbReference>
<dbReference type="Bgee" id="ENSG00000149823">
    <property type="expression patterns" value="Expressed in body of pancreas and 197 other cell types or tissues"/>
</dbReference>
<dbReference type="ExpressionAtlas" id="Q9UID3">
    <property type="expression patterns" value="baseline and differential"/>
</dbReference>
<dbReference type="GO" id="GO:0005829">
    <property type="term" value="C:cytosol"/>
    <property type="evidence" value="ECO:0007669"/>
    <property type="project" value="GOC"/>
</dbReference>
<dbReference type="GO" id="GO:1990745">
    <property type="term" value="C:EARP complex"/>
    <property type="evidence" value="ECO:0000314"/>
    <property type="project" value="UniProtKB"/>
</dbReference>
<dbReference type="GO" id="GO:0000938">
    <property type="term" value="C:GARP complex"/>
    <property type="evidence" value="ECO:0000314"/>
    <property type="project" value="UniProtKB"/>
</dbReference>
<dbReference type="GO" id="GO:0005794">
    <property type="term" value="C:Golgi apparatus"/>
    <property type="evidence" value="ECO:0000314"/>
    <property type="project" value="HPA"/>
</dbReference>
<dbReference type="GO" id="GO:0043231">
    <property type="term" value="C:intracellular membrane-bounded organelle"/>
    <property type="evidence" value="ECO:0000314"/>
    <property type="project" value="HPA"/>
</dbReference>
<dbReference type="GO" id="GO:0016020">
    <property type="term" value="C:membrane"/>
    <property type="evidence" value="ECO:0000314"/>
    <property type="project" value="MGI"/>
</dbReference>
<dbReference type="GO" id="GO:0005730">
    <property type="term" value="C:nucleolus"/>
    <property type="evidence" value="ECO:0000314"/>
    <property type="project" value="HPA"/>
</dbReference>
<dbReference type="GO" id="GO:0055037">
    <property type="term" value="C:recycling endosome"/>
    <property type="evidence" value="ECO:0000314"/>
    <property type="project" value="UniProtKB"/>
</dbReference>
<dbReference type="GO" id="GO:0032588">
    <property type="term" value="C:trans-Golgi network membrane"/>
    <property type="evidence" value="ECO:0000304"/>
    <property type="project" value="Reactome"/>
</dbReference>
<dbReference type="GO" id="GO:0006914">
    <property type="term" value="P:autophagy"/>
    <property type="evidence" value="ECO:0000315"/>
    <property type="project" value="UniProtKB"/>
</dbReference>
<dbReference type="GO" id="GO:0048854">
    <property type="term" value="P:brain morphogenesis"/>
    <property type="evidence" value="ECO:0000314"/>
    <property type="project" value="UniProtKB"/>
</dbReference>
<dbReference type="GO" id="GO:0032456">
    <property type="term" value="P:endocytic recycling"/>
    <property type="evidence" value="ECO:0000315"/>
    <property type="project" value="UniProtKB"/>
</dbReference>
<dbReference type="GO" id="GO:0007030">
    <property type="term" value="P:Golgi organization"/>
    <property type="evidence" value="ECO:0000318"/>
    <property type="project" value="GO_Central"/>
</dbReference>
<dbReference type="GO" id="GO:0048193">
    <property type="term" value="P:Golgi vesicle transport"/>
    <property type="evidence" value="ECO:0000318"/>
    <property type="project" value="GO_Central"/>
</dbReference>
<dbReference type="GO" id="GO:0007041">
    <property type="term" value="P:lysosomal transport"/>
    <property type="evidence" value="ECO:0000315"/>
    <property type="project" value="MGI"/>
</dbReference>
<dbReference type="GO" id="GO:0006605">
    <property type="term" value="P:protein targeting"/>
    <property type="evidence" value="ECO:0007669"/>
    <property type="project" value="Ensembl"/>
</dbReference>
<dbReference type="GO" id="GO:0015031">
    <property type="term" value="P:protein transport"/>
    <property type="evidence" value="ECO:0007669"/>
    <property type="project" value="UniProtKB-KW"/>
</dbReference>
<dbReference type="GO" id="GO:0042147">
    <property type="term" value="P:retrograde transport, endosome to Golgi"/>
    <property type="evidence" value="ECO:0000314"/>
    <property type="project" value="UniProtKB"/>
</dbReference>
<dbReference type="GO" id="GO:0090119">
    <property type="term" value="P:vesicle-mediated cholesterol transport"/>
    <property type="evidence" value="ECO:0007669"/>
    <property type="project" value="Ensembl"/>
</dbReference>
<dbReference type="InterPro" id="IPR016159">
    <property type="entry name" value="Cullin_repeat-like_dom_sf"/>
</dbReference>
<dbReference type="InterPro" id="IPR014812">
    <property type="entry name" value="Vps51"/>
</dbReference>
<dbReference type="PANTHER" id="PTHR15954">
    <property type="entry name" value="VACUOLAR PROTEIN SORTING-ASSOCIATED PROTEIN 51 HOMOLOG"/>
    <property type="match status" value="1"/>
</dbReference>
<dbReference type="PANTHER" id="PTHR15954:SF4">
    <property type="entry name" value="VACUOLAR PROTEIN SORTING-ASSOCIATED PROTEIN 51 HOMOLOG"/>
    <property type="match status" value="1"/>
</dbReference>
<dbReference type="Pfam" id="PF08700">
    <property type="entry name" value="VPS51_Exo84_N"/>
    <property type="match status" value="1"/>
</dbReference>
<dbReference type="SUPFAM" id="SSF74788">
    <property type="entry name" value="Cullin repeat-like"/>
    <property type="match status" value="1"/>
</dbReference>
<accession>Q9UID3</accession>
<accession>Q6PJV5</accession>
<accession>Q7L8A6</accession>
<accession>Q8WZ35</accession>
<accession>Q96DF4</accession>
<accession>Q96GR3</accession>
<reference key="1">
    <citation type="journal article" date="1998" name="Genomics">
        <title>Identification and molecular characterization of TM7SF2 in the FAUNA gene cluster on human chromosome 11q13.</title>
        <authorList>
            <person name="Lemmens I.H."/>
            <person name="Kas K."/>
            <person name="Merregaert J."/>
            <person name="Van de Ven W.J.M."/>
        </authorList>
    </citation>
    <scope>NUCLEOTIDE SEQUENCE [MRNA] (ISOFORM 1)</scope>
</reference>
<reference key="2">
    <citation type="submission" date="2000-05" db="EMBL/GenBank/DDBJ databases">
        <authorList>
            <person name="Lemmens I.H."/>
            <person name="Kas K."/>
            <person name="Merregaert J."/>
            <person name="Van de Ven W.J.M."/>
        </authorList>
    </citation>
    <scope>SEQUENCE REVISION</scope>
</reference>
<reference key="3">
    <citation type="journal article" date="2004" name="Proc. Natl. Acad. Sci. U.S.A.">
        <title>Large-scale cDNA transfection screening for genes related to cancer development and progression.</title>
        <authorList>
            <person name="Wan D."/>
            <person name="Gong Y."/>
            <person name="Qin W."/>
            <person name="Zhang P."/>
            <person name="Li J."/>
            <person name="Wei L."/>
            <person name="Zhou X."/>
            <person name="Li H."/>
            <person name="Qiu X."/>
            <person name="Zhong F."/>
            <person name="He L."/>
            <person name="Yu J."/>
            <person name="Yao G."/>
            <person name="Jiang H."/>
            <person name="Qian L."/>
            <person name="Yu Y."/>
            <person name="Shu H."/>
            <person name="Chen X."/>
            <person name="Xu H."/>
            <person name="Guo M."/>
            <person name="Pan Z."/>
            <person name="Chen Y."/>
            <person name="Ge C."/>
            <person name="Yang S."/>
            <person name="Gu J."/>
        </authorList>
    </citation>
    <scope>NUCLEOTIDE SEQUENCE [LARGE SCALE MRNA] (ISOFORM 2)</scope>
</reference>
<reference key="4">
    <citation type="journal article" date="2006" name="Nature">
        <title>Human chromosome 11 DNA sequence and analysis including novel gene identification.</title>
        <authorList>
            <person name="Taylor T.D."/>
            <person name="Noguchi H."/>
            <person name="Totoki Y."/>
            <person name="Toyoda A."/>
            <person name="Kuroki Y."/>
            <person name="Dewar K."/>
            <person name="Lloyd C."/>
            <person name="Itoh T."/>
            <person name="Takeda T."/>
            <person name="Kim D.-W."/>
            <person name="She X."/>
            <person name="Barlow K.F."/>
            <person name="Bloom T."/>
            <person name="Bruford E."/>
            <person name="Chang J.L."/>
            <person name="Cuomo C.A."/>
            <person name="Eichler E."/>
            <person name="FitzGerald M.G."/>
            <person name="Jaffe D.B."/>
            <person name="LaButti K."/>
            <person name="Nicol R."/>
            <person name="Park H.-S."/>
            <person name="Seaman C."/>
            <person name="Sougnez C."/>
            <person name="Yang X."/>
            <person name="Zimmer A.R."/>
            <person name="Zody M.C."/>
            <person name="Birren B.W."/>
            <person name="Nusbaum C."/>
            <person name="Fujiyama A."/>
            <person name="Hattori M."/>
            <person name="Rogers J."/>
            <person name="Lander E.S."/>
            <person name="Sakaki Y."/>
        </authorList>
    </citation>
    <scope>NUCLEOTIDE SEQUENCE [LARGE SCALE GENOMIC DNA]</scope>
</reference>
<reference key="5">
    <citation type="journal article" date="2004" name="Genome Res.">
        <title>The status, quality, and expansion of the NIH full-length cDNA project: the Mammalian Gene Collection (MGC).</title>
        <authorList>
            <consortium name="The MGC Project Team"/>
        </authorList>
    </citation>
    <scope>NUCLEOTIDE SEQUENCE [LARGE SCALE MRNA] (ISOFORM 1)</scope>
    <source>
        <tissue>Cervix</tissue>
        <tissue>Eye</tissue>
        <tissue>Lung</tissue>
        <tissue>Muscle</tissue>
    </source>
</reference>
<reference key="6">
    <citation type="journal article" date="2007" name="BMC Genomics">
        <title>The full-ORF clone resource of the German cDNA consortium.</title>
        <authorList>
            <person name="Bechtel S."/>
            <person name="Rosenfelder H."/>
            <person name="Duda A."/>
            <person name="Schmidt C.P."/>
            <person name="Ernst U."/>
            <person name="Wellenreuther R."/>
            <person name="Mehrle A."/>
            <person name="Schuster C."/>
            <person name="Bahr A."/>
            <person name="Bloecker H."/>
            <person name="Heubner D."/>
            <person name="Hoerlein A."/>
            <person name="Michel G."/>
            <person name="Wedler H."/>
            <person name="Koehrer K."/>
            <person name="Ottenwaelder B."/>
            <person name="Poustka A."/>
            <person name="Wiemann S."/>
            <person name="Schupp I."/>
        </authorList>
    </citation>
    <scope>NUCLEOTIDE SEQUENCE [LARGE SCALE MRNA] OF 120-782 (ISOFORM 1)</scope>
    <source>
        <tissue>Testis</tissue>
    </source>
</reference>
<reference key="7">
    <citation type="journal article" date="2008" name="Mol. Cell">
        <title>Kinase-selective enrichment enables quantitative phosphoproteomics of the kinome across the cell cycle.</title>
        <authorList>
            <person name="Daub H."/>
            <person name="Olsen J.V."/>
            <person name="Bairlein M."/>
            <person name="Gnad F."/>
            <person name="Oppermann F.S."/>
            <person name="Korner R."/>
            <person name="Greff Z."/>
            <person name="Keri G."/>
            <person name="Stemmann O."/>
            <person name="Mann M."/>
        </authorList>
    </citation>
    <scope>PHOSPHORYLATION [LARGE SCALE ANALYSIS] AT SER-18</scope>
    <scope>IDENTIFICATION BY MASS SPECTROMETRY [LARGE SCALE ANALYSIS]</scope>
    <source>
        <tissue>Cervix carcinoma</tissue>
    </source>
</reference>
<reference key="8">
    <citation type="journal article" date="2009" name="Anal. Chem.">
        <title>Lys-N and trypsin cover complementary parts of the phosphoproteome in a refined SCX-based approach.</title>
        <authorList>
            <person name="Gauci S."/>
            <person name="Helbig A.O."/>
            <person name="Slijper M."/>
            <person name="Krijgsveld J."/>
            <person name="Heck A.J."/>
            <person name="Mohammed S."/>
        </authorList>
    </citation>
    <scope>ACETYLATION [LARGE SCALE ANALYSIS] AT ALA-2</scope>
    <scope>CLEAVAGE OF INITIATOR METHIONINE [LARGE SCALE ANALYSIS]</scope>
    <scope>IDENTIFICATION BY MASS SPECTROMETRY [LARGE SCALE ANALYSIS]</scope>
</reference>
<reference key="9">
    <citation type="journal article" date="2010" name="Mol. Biol. Cell">
        <title>Ang2/fat-free is a conserved subunit of the Golgi-associated retrograde protein complex.</title>
        <authorList>
            <person name="Perez-Victoria F.J."/>
            <person name="Schindler C."/>
            <person name="Magadan J.G."/>
            <person name="Mardones G.A."/>
            <person name="Delevoye C."/>
            <person name="Romao M."/>
            <person name="Raposo G."/>
            <person name="Bonifacino J.S."/>
        </authorList>
    </citation>
    <scope>FUNCTION</scope>
    <scope>SUBCELLULAR LOCATION</scope>
    <scope>INTERACTION WITH VPS52; VPS53; VPS54 AND STX6</scope>
</reference>
<reference key="10">
    <citation type="journal article" date="2011" name="BMC Syst. Biol.">
        <title>Initial characterization of the human central proteome.</title>
        <authorList>
            <person name="Burkard T.R."/>
            <person name="Planyavsky M."/>
            <person name="Kaupe I."/>
            <person name="Breitwieser F.P."/>
            <person name="Buerckstuemmer T."/>
            <person name="Bennett K.L."/>
            <person name="Superti-Furga G."/>
            <person name="Colinge J."/>
        </authorList>
    </citation>
    <scope>IDENTIFICATION BY MASS SPECTROMETRY [LARGE SCALE ANALYSIS]</scope>
</reference>
<reference key="11">
    <citation type="journal article" date="2012" name="Mol. Cell. Proteomics">
        <title>Comparative large-scale characterisation of plant vs. mammal proteins reveals similar and idiosyncratic N-alpha acetylation features.</title>
        <authorList>
            <person name="Bienvenut W.V."/>
            <person name="Sumpton D."/>
            <person name="Martinez A."/>
            <person name="Lilla S."/>
            <person name="Espagne C."/>
            <person name="Meinnel T."/>
            <person name="Giglione C."/>
        </authorList>
    </citation>
    <scope>ACETYLATION [LARGE SCALE ANALYSIS] AT ALA-2</scope>
    <scope>CLEAVAGE OF INITIATOR METHIONINE [LARGE SCALE ANALYSIS]</scope>
    <scope>IDENTIFICATION BY MASS SPECTROMETRY [LARGE SCALE ANALYSIS]</scope>
</reference>
<reference key="12">
    <citation type="journal article" date="2012" name="Proc. Natl. Acad. Sci. U.S.A.">
        <title>N-terminal acetylome analyses and functional insights of the N-terminal acetyltransferase NatB.</title>
        <authorList>
            <person name="Van Damme P."/>
            <person name="Lasa M."/>
            <person name="Polevoda B."/>
            <person name="Gazquez C."/>
            <person name="Elosegui-Artola A."/>
            <person name="Kim D.S."/>
            <person name="De Juan-Pardo E."/>
            <person name="Demeyer K."/>
            <person name="Hole K."/>
            <person name="Larrea E."/>
            <person name="Timmerman E."/>
            <person name="Prieto J."/>
            <person name="Arnesen T."/>
            <person name="Sherman F."/>
            <person name="Gevaert K."/>
            <person name="Aldabe R."/>
        </authorList>
    </citation>
    <scope>ACETYLATION [LARGE SCALE ANALYSIS] AT ALA-2</scope>
    <scope>CLEAVAGE OF INITIATOR METHIONINE [LARGE SCALE ANALYSIS]</scope>
    <scope>IDENTIFICATION BY MASS SPECTROMETRY [LARGE SCALE ANALYSIS]</scope>
</reference>
<reference key="13">
    <citation type="journal article" date="2013" name="J. Proteome Res.">
        <title>Toward a comprehensive characterization of a human cancer cell phosphoproteome.</title>
        <authorList>
            <person name="Zhou H."/>
            <person name="Di Palma S."/>
            <person name="Preisinger C."/>
            <person name="Peng M."/>
            <person name="Polat A.N."/>
            <person name="Heck A.J."/>
            <person name="Mohammed S."/>
        </authorList>
    </citation>
    <scope>PHOSPHORYLATION [LARGE SCALE ANALYSIS] AT SER-18 AND SER-649</scope>
    <scope>IDENTIFICATION BY MASS SPECTROMETRY [LARGE SCALE ANALYSIS]</scope>
    <source>
        <tissue>Cervix carcinoma</tissue>
        <tissue>Erythroleukemia</tissue>
    </source>
</reference>
<reference key="14">
    <citation type="journal article" date="2015" name="Nat. Cell Biol.">
        <title>EARP is a multisubunit tethering complex involved in endocytic recycling.</title>
        <authorList>
            <person name="Schindler C."/>
            <person name="Chen Y."/>
            <person name="Pu J."/>
            <person name="Guo X."/>
            <person name="Bonifacino J.S."/>
        </authorList>
    </citation>
    <scope>FUNCTION</scope>
    <scope>SUBCELLULAR LOCATION</scope>
    <scope>IDENTIFICATION IN THE EARP COMPLEX</scope>
</reference>
<reference key="15">
    <citation type="journal article" date="2015" name="Proteomics">
        <title>N-terminome analysis of the human mitochondrial proteome.</title>
        <authorList>
            <person name="Vaca Jacome A.S."/>
            <person name="Rabilloud T."/>
            <person name="Schaeffer-Reiss C."/>
            <person name="Rompais M."/>
            <person name="Ayoub D."/>
            <person name="Lane L."/>
            <person name="Bairoch A."/>
            <person name="Van Dorsselaer A."/>
            <person name="Carapito C."/>
        </authorList>
    </citation>
    <scope>IDENTIFICATION BY MASS SPECTROMETRY [LARGE SCALE ANALYSIS]</scope>
</reference>
<reference key="16">
    <citation type="journal article" date="2016" name="Mol. Biol. Cell">
        <title>TSSC1 is novel component of the endosomal retrieval machinery.</title>
        <authorList>
            <person name="Gershlick D.C."/>
            <person name="Schindler C."/>
            <person name="Chen Y."/>
            <person name="Bonifacino J.S."/>
        </authorList>
    </citation>
    <scope>INTERACTION WITH EIPR1</scope>
    <scope>IDENTIFICATION IN THE EARP COMPLEX</scope>
    <scope>IDENTIFICATION IN THE GARP COMPLEX</scope>
</reference>
<reference key="17">
    <citation type="journal article" date="2020" name="Mol. Biol. Cell">
        <title>EIPR1 controls dense-core vesicle cargo retention and EARP complex localization in insulin-secreting cells.</title>
        <authorList>
            <person name="Topalidou I."/>
            <person name="Cattin-Ortola J."/>
            <person name="Hummer B."/>
            <person name="Asensio C.S."/>
            <person name="Ailion M."/>
        </authorList>
    </citation>
    <scope>INTERACTION WITH VPS50 AND VPS54</scope>
</reference>
<reference key="18">
    <citation type="journal article" date="2019" name="Hum. Mol. Genet.">
        <title>A neurodevelopmental disorder caused by mutations in the VPS51 subunit of the GARP and EARP complexes.</title>
        <authorList>
            <person name="Gershlick D.C."/>
            <person name="Ishida M."/>
            <person name="Jones J.R."/>
            <person name="Bellomo A."/>
            <person name="Bonifacino J.S."/>
            <person name="Everman D.B."/>
        </authorList>
    </citation>
    <scope>VARIANT PCH13 CYS-490</scope>
    <scope>INVOLVEMENT IN PCH13</scope>
    <scope>CHARACTERIZATION OF VARIANT PCH13 CYS-490</scope>
    <scope>INTERACTION WITH VSP50 AND VSP53</scope>
</reference>
<reference key="19">
    <citation type="journal article" date="2019" name="Eur. J. Med. Genet.">
        <title>VPS51 biallelic variants cause microcephaly with brain malformations: A confirmatory report.</title>
        <authorList>
            <person name="Uwineza A."/>
            <person name="Caberg J.H."/>
            <person name="Hitayezu J."/>
            <person name="Wenric S."/>
            <person name="Mutesa L."/>
            <person name="Vial Y."/>
            <person name="Drunat S."/>
            <person name="Passemard S."/>
            <person name="Verloes A."/>
            <person name="El Ghouzzi V."/>
            <person name="Bours V."/>
        </authorList>
    </citation>
    <scope>VARIANT PCH13 PHE-474 DEL</scope>
    <scope>INVOLVEMENT IN PCH13</scope>
</reference>
<organism>
    <name type="scientific">Homo sapiens</name>
    <name type="common">Human</name>
    <dbReference type="NCBI Taxonomy" id="9606"/>
    <lineage>
        <taxon>Eukaryota</taxon>
        <taxon>Metazoa</taxon>
        <taxon>Chordata</taxon>
        <taxon>Craniata</taxon>
        <taxon>Vertebrata</taxon>
        <taxon>Euteleostomi</taxon>
        <taxon>Mammalia</taxon>
        <taxon>Eutheria</taxon>
        <taxon>Euarchontoglires</taxon>
        <taxon>Primates</taxon>
        <taxon>Haplorrhini</taxon>
        <taxon>Catarrhini</taxon>
        <taxon>Hominidae</taxon>
        <taxon>Homo</taxon>
    </lineage>
</organism>
<gene>
    <name type="primary">VPS51</name>
    <name type="synonym">ANG2</name>
    <name type="synonym">C11orf2</name>
    <name type="synonym">C11orf3</name>
    <name type="synonym">FFR</name>
    <name type="ORF">PP5382</name>
</gene>
<protein>
    <recommendedName>
        <fullName>Vacuolar protein sorting-associated protein 51 homolog</fullName>
    </recommendedName>
    <alternativeName>
        <fullName>Another new gene 2 protein</fullName>
    </alternativeName>
    <alternativeName>
        <fullName>Protein fat-free homolog</fullName>
    </alternativeName>
</protein>
<feature type="initiator methionine" description="Removed" evidence="13 14 15">
    <location>
        <position position="1"/>
    </location>
</feature>
<feature type="chain" id="PRO_0000089831" description="Vacuolar protein sorting-associated protein 51 homolog">
    <location>
        <begin position="2"/>
        <end position="782"/>
    </location>
</feature>
<feature type="region of interest" description="Disordered" evidence="3">
    <location>
        <begin position="1"/>
        <end position="37"/>
    </location>
</feature>
<feature type="coiled-coil region" evidence="2">
    <location>
        <begin position="116"/>
        <end position="147"/>
    </location>
</feature>
<feature type="coiled-coil region" evidence="2">
    <location>
        <begin position="270"/>
        <end position="292"/>
    </location>
</feature>
<feature type="compositionally biased region" description="Low complexity" evidence="3">
    <location>
        <begin position="1"/>
        <end position="19"/>
    </location>
</feature>
<feature type="modified residue" description="N-acetylalanine" evidence="13 14 15">
    <location>
        <position position="2"/>
    </location>
</feature>
<feature type="modified residue" description="Phosphoserine" evidence="12 16">
    <location>
        <position position="18"/>
    </location>
</feature>
<feature type="modified residue" description="Phosphoserine" evidence="1">
    <location>
        <position position="44"/>
    </location>
</feature>
<feature type="modified residue" description="Phosphoserine" evidence="16">
    <location>
        <position position="649"/>
    </location>
</feature>
<feature type="splice variant" id="VSP_014700" description="In isoform 2." evidence="10">
    <location>
        <begin position="1"/>
        <end position="124"/>
    </location>
</feature>
<feature type="sequence variant" id="VAR_083138" description="In PCH13; uncertain significance." evidence="8">
    <location>
        <position position="474"/>
    </location>
</feature>
<feature type="sequence variant" id="VAR_083139" description="In PCH13; impaired association with VPS50 and VPS53 subunits; reduced levels of assembled GARP and EARP complexes; dbSNP:rs1203009966." evidence="7">
    <original>R</original>
    <variation>C</variation>
    <location>
        <position position="490"/>
    </location>
</feature>
<feature type="helix" evidence="17">
    <location>
        <begin position="34"/>
        <end position="41"/>
    </location>
</feature>
<evidence type="ECO:0000250" key="1">
    <source>
        <dbReference type="UniProtKB" id="Q3UVL4"/>
    </source>
</evidence>
<evidence type="ECO:0000255" key="2"/>
<evidence type="ECO:0000256" key="3">
    <source>
        <dbReference type="SAM" id="MobiDB-lite"/>
    </source>
</evidence>
<evidence type="ECO:0000269" key="4">
    <source>
    </source>
</evidence>
<evidence type="ECO:0000269" key="5">
    <source>
    </source>
</evidence>
<evidence type="ECO:0000269" key="6">
    <source>
    </source>
</evidence>
<evidence type="ECO:0000269" key="7">
    <source>
    </source>
</evidence>
<evidence type="ECO:0000269" key="8">
    <source>
    </source>
</evidence>
<evidence type="ECO:0000269" key="9">
    <source>
    </source>
</evidence>
<evidence type="ECO:0000303" key="10">
    <source>
    </source>
</evidence>
<evidence type="ECO:0000305" key="11"/>
<evidence type="ECO:0007744" key="12">
    <source>
    </source>
</evidence>
<evidence type="ECO:0007744" key="13">
    <source>
    </source>
</evidence>
<evidence type="ECO:0007744" key="14">
    <source>
    </source>
</evidence>
<evidence type="ECO:0007744" key="15">
    <source>
    </source>
</evidence>
<evidence type="ECO:0007744" key="16">
    <source>
    </source>
</evidence>
<evidence type="ECO:0007829" key="17">
    <source>
        <dbReference type="PDB" id="4J2C"/>
    </source>
</evidence>
<name>VPS51_HUMAN</name>
<keyword id="KW-0002">3D-structure</keyword>
<keyword id="KW-0007">Acetylation</keyword>
<keyword id="KW-0025">Alternative splicing</keyword>
<keyword id="KW-0175">Coiled coil</keyword>
<keyword id="KW-0225">Disease variant</keyword>
<keyword id="KW-0967">Endosome</keyword>
<keyword id="KW-0333">Golgi apparatus</keyword>
<keyword id="KW-0991">Intellectual disability</keyword>
<keyword id="KW-0445">Lipid transport</keyword>
<keyword id="KW-0597">Phosphoprotein</keyword>
<keyword id="KW-0653">Protein transport</keyword>
<keyword id="KW-1267">Proteomics identification</keyword>
<keyword id="KW-1185">Reference proteome</keyword>
<keyword id="KW-0813">Transport</keyword>